<accession>A5UCI1</accession>
<sequence length="205" mass="23090">MKKTTLKFAALTLLGLSNLALADAASELQMRLAKVDVLSAEFVQTVTSGSGKNVQQGSGKLQIKRPNLFRMETKTPQETQIISDGKTLWFYDPFVQQVTAQWVKNAVNNTPFVLLTSNDNSHWHQYTVTQQSDTFVLKPTLSTSNIKQFDIRVDANGILRNFSTTEKDGQTNLYVLRNITNQTLSDSLFQFKPEKGVEVDDQRKK</sequence>
<dbReference type="EMBL" id="CP000671">
    <property type="protein sequence ID" value="ABQ98482.1"/>
    <property type="molecule type" value="Genomic_DNA"/>
</dbReference>
<dbReference type="SMR" id="A5UCI1"/>
<dbReference type="KEGG" id="hip:CGSHiEE_05575"/>
<dbReference type="HOGENOM" id="CLU_087560_1_1_6"/>
<dbReference type="GO" id="GO:0030288">
    <property type="term" value="C:outer membrane-bounded periplasmic space"/>
    <property type="evidence" value="ECO:0007669"/>
    <property type="project" value="TreeGrafter"/>
</dbReference>
<dbReference type="GO" id="GO:0044874">
    <property type="term" value="P:lipoprotein localization to outer membrane"/>
    <property type="evidence" value="ECO:0007669"/>
    <property type="project" value="UniProtKB-UniRule"/>
</dbReference>
<dbReference type="GO" id="GO:0042953">
    <property type="term" value="P:lipoprotein transport"/>
    <property type="evidence" value="ECO:0007669"/>
    <property type="project" value="InterPro"/>
</dbReference>
<dbReference type="CDD" id="cd16325">
    <property type="entry name" value="LolA"/>
    <property type="match status" value="1"/>
</dbReference>
<dbReference type="Gene3D" id="2.50.20.10">
    <property type="entry name" value="Lipoprotein localisation LolA/LolB/LppX"/>
    <property type="match status" value="1"/>
</dbReference>
<dbReference type="HAMAP" id="MF_00240">
    <property type="entry name" value="LolA"/>
    <property type="match status" value="1"/>
</dbReference>
<dbReference type="InterPro" id="IPR029046">
    <property type="entry name" value="LolA/LolB/LppX"/>
</dbReference>
<dbReference type="InterPro" id="IPR004564">
    <property type="entry name" value="OM_lipoprot_carrier_LolA-like"/>
</dbReference>
<dbReference type="InterPro" id="IPR018323">
    <property type="entry name" value="OM_lipoprot_carrier_LolA_Pbac"/>
</dbReference>
<dbReference type="NCBIfam" id="TIGR00547">
    <property type="entry name" value="lolA"/>
    <property type="match status" value="1"/>
</dbReference>
<dbReference type="PANTHER" id="PTHR35869">
    <property type="entry name" value="OUTER-MEMBRANE LIPOPROTEIN CARRIER PROTEIN"/>
    <property type="match status" value="1"/>
</dbReference>
<dbReference type="PANTHER" id="PTHR35869:SF1">
    <property type="entry name" value="OUTER-MEMBRANE LIPOPROTEIN CARRIER PROTEIN"/>
    <property type="match status" value="1"/>
</dbReference>
<dbReference type="Pfam" id="PF03548">
    <property type="entry name" value="LolA"/>
    <property type="match status" value="1"/>
</dbReference>
<dbReference type="SUPFAM" id="SSF89392">
    <property type="entry name" value="Prokaryotic lipoproteins and lipoprotein localization factors"/>
    <property type="match status" value="1"/>
</dbReference>
<name>LOLA_HAEIE</name>
<gene>
    <name evidence="1" type="primary">lolA</name>
    <name type="ordered locus">CGSHiEE_05575</name>
</gene>
<proteinExistence type="inferred from homology"/>
<evidence type="ECO:0000255" key="1">
    <source>
        <dbReference type="HAMAP-Rule" id="MF_00240"/>
    </source>
</evidence>
<reference key="1">
    <citation type="journal article" date="2007" name="Genome Biol.">
        <title>Characterization and modeling of the Haemophilus influenzae core and supragenomes based on the complete genomic sequences of Rd and 12 clinical nontypeable strains.</title>
        <authorList>
            <person name="Hogg J.S."/>
            <person name="Hu F.Z."/>
            <person name="Janto B."/>
            <person name="Boissy R."/>
            <person name="Hayes J."/>
            <person name="Keefe R."/>
            <person name="Post J.C."/>
            <person name="Ehrlich G.D."/>
        </authorList>
    </citation>
    <scope>NUCLEOTIDE SEQUENCE [LARGE SCALE GENOMIC DNA]</scope>
    <source>
        <strain>PittEE</strain>
    </source>
</reference>
<comment type="function">
    <text evidence="1">Participates in the translocation of lipoproteins from the inner membrane to the outer membrane. Only forms a complex with a lipoprotein if the residue after the N-terminal Cys is not an aspartate (The Asp acts as a targeting signal to indicate that the lipoprotein should stay in the inner membrane).</text>
</comment>
<comment type="subunit">
    <text evidence="1">Monomer.</text>
</comment>
<comment type="subcellular location">
    <subcellularLocation>
        <location evidence="1">Periplasm</location>
    </subcellularLocation>
</comment>
<comment type="similarity">
    <text evidence="1">Belongs to the LolA family.</text>
</comment>
<keyword id="KW-0143">Chaperone</keyword>
<keyword id="KW-0574">Periplasm</keyword>
<keyword id="KW-0653">Protein transport</keyword>
<keyword id="KW-0732">Signal</keyword>
<keyword id="KW-0813">Transport</keyword>
<protein>
    <recommendedName>
        <fullName evidence="1">Outer-membrane lipoprotein carrier protein</fullName>
    </recommendedName>
</protein>
<organism>
    <name type="scientific">Haemophilus influenzae (strain PittEE)</name>
    <dbReference type="NCBI Taxonomy" id="374930"/>
    <lineage>
        <taxon>Bacteria</taxon>
        <taxon>Pseudomonadati</taxon>
        <taxon>Pseudomonadota</taxon>
        <taxon>Gammaproteobacteria</taxon>
        <taxon>Pasteurellales</taxon>
        <taxon>Pasteurellaceae</taxon>
        <taxon>Haemophilus</taxon>
    </lineage>
</organism>
<feature type="signal peptide" evidence="1">
    <location>
        <begin position="1"/>
        <end position="22"/>
    </location>
</feature>
<feature type="chain" id="PRO_1000005692" description="Outer-membrane lipoprotein carrier protein">
    <location>
        <begin position="23"/>
        <end position="205"/>
    </location>
</feature>